<name>OPRM_SAIBB</name>
<protein>
    <recommendedName>
        <fullName>Mu-type opioid receptor</fullName>
        <shortName>M-OR-1</shortName>
        <shortName>MOR-1</shortName>
    </recommendedName>
</protein>
<evidence type="ECO:0000250" key="1">
    <source>
        <dbReference type="UniProtKB" id="P33535"/>
    </source>
</evidence>
<evidence type="ECO:0000250" key="2">
    <source>
        <dbReference type="UniProtKB" id="P35372"/>
    </source>
</evidence>
<evidence type="ECO:0000250" key="3">
    <source>
        <dbReference type="UniProtKB" id="P42866"/>
    </source>
</evidence>
<evidence type="ECO:0000250" key="4">
    <source>
        <dbReference type="UniProtKB" id="P97266"/>
    </source>
</evidence>
<evidence type="ECO:0000255" key="5"/>
<evidence type="ECO:0000255" key="6">
    <source>
        <dbReference type="PROSITE-ProRule" id="PRU00521"/>
    </source>
</evidence>
<sequence>MDSSAVPANASNCTDPLAPSTCSPAPGPGSWVNLSHLDGNLSDPCGPNRTDLGGSDSPCPPTGSPSMITAITIMALYSIVCVVGLFGNFLVMYVIVRYTKMKTATNIYIFNLALADALATSTLPFQSVNYLMGTWPFGTILCKIVISIDYYNMFTSIFTLCTMSVDRYIAVCHPVKALDFRTPRNAKIVNVCNWIISSAIGLPVMFMATTKYRQGSIDCTLTFSHPTWYWENLLKICVFIFAFIMPVLIITVCYGLMILRLKSVRMLSGSKEKDRNLRRITRMVLVVVAVFIVCWTPIHIYVIIKALVTIPETTFQTVSWHFCIALGYTNSCLNPVLYAFLDENFKRCFREFCIPTPSAIEQQNSARIRQNTRDHPSTANTVDRTNHQLENLEAETAPLP</sequence>
<gene>
    <name type="primary">OPRM1</name>
</gene>
<dbReference type="EMBL" id="AY665244">
    <property type="protein sequence ID" value="AAV74282.1"/>
    <property type="molecule type" value="mRNA"/>
</dbReference>
<dbReference type="RefSeq" id="NP_001266908.1">
    <property type="nucleotide sequence ID" value="NM_001279979.1"/>
</dbReference>
<dbReference type="SMR" id="Q5IS84"/>
<dbReference type="STRING" id="39432.ENSSBOP00000020184"/>
<dbReference type="GlyCosmos" id="Q5IS84">
    <property type="glycosylation" value="5 sites, No reported glycans"/>
</dbReference>
<dbReference type="Ensembl" id="ENSSBOT00000037002.1">
    <property type="protein sequence ID" value="ENSSBOP00000020175.1"/>
    <property type="gene ID" value="ENSSBOG00000026674.1"/>
</dbReference>
<dbReference type="GeneID" id="101042291"/>
<dbReference type="CTD" id="4988"/>
<dbReference type="GeneTree" id="ENSGT00940000158236"/>
<dbReference type="Proteomes" id="UP000233220">
    <property type="component" value="Unplaced"/>
</dbReference>
<dbReference type="GO" id="GO:0030424">
    <property type="term" value="C:axon"/>
    <property type="evidence" value="ECO:0000250"/>
    <property type="project" value="UniProtKB"/>
</dbReference>
<dbReference type="GO" id="GO:0030425">
    <property type="term" value="C:dendrite"/>
    <property type="evidence" value="ECO:0000250"/>
    <property type="project" value="UniProtKB"/>
</dbReference>
<dbReference type="GO" id="GO:0005768">
    <property type="term" value="C:endosome"/>
    <property type="evidence" value="ECO:0000250"/>
    <property type="project" value="UniProtKB"/>
</dbReference>
<dbReference type="GO" id="GO:0043204">
    <property type="term" value="C:perikaryon"/>
    <property type="evidence" value="ECO:0007669"/>
    <property type="project" value="UniProtKB-SubCell"/>
</dbReference>
<dbReference type="GO" id="GO:0005886">
    <property type="term" value="C:plasma membrane"/>
    <property type="evidence" value="ECO:0000250"/>
    <property type="project" value="UniProtKB"/>
</dbReference>
<dbReference type="GO" id="GO:0045202">
    <property type="term" value="C:synapse"/>
    <property type="evidence" value="ECO:0007669"/>
    <property type="project" value="GOC"/>
</dbReference>
<dbReference type="GO" id="GO:0004979">
    <property type="term" value="F:beta-endorphin receptor activity"/>
    <property type="evidence" value="ECO:0007669"/>
    <property type="project" value="InterPro"/>
</dbReference>
<dbReference type="GO" id="GO:0004930">
    <property type="term" value="F:G protein-coupled receptor activity"/>
    <property type="evidence" value="ECO:0000250"/>
    <property type="project" value="UniProtKB"/>
</dbReference>
<dbReference type="GO" id="GO:0001965">
    <property type="term" value="F:G-protein alpha-subunit binding"/>
    <property type="evidence" value="ECO:0000250"/>
    <property type="project" value="UniProtKB"/>
</dbReference>
<dbReference type="GO" id="GO:0031681">
    <property type="term" value="F:G-protein beta-subunit binding"/>
    <property type="evidence" value="ECO:0007669"/>
    <property type="project" value="TreeGrafter"/>
</dbReference>
<dbReference type="GO" id="GO:0038047">
    <property type="term" value="F:morphine receptor activity"/>
    <property type="evidence" value="ECO:0000250"/>
    <property type="project" value="UniProtKB"/>
</dbReference>
<dbReference type="GO" id="GO:0042923">
    <property type="term" value="F:neuropeptide binding"/>
    <property type="evidence" value="ECO:0007669"/>
    <property type="project" value="TreeGrafter"/>
</dbReference>
<dbReference type="GO" id="GO:0005245">
    <property type="term" value="F:voltage-gated calcium channel activity"/>
    <property type="evidence" value="ECO:0000250"/>
    <property type="project" value="UniProtKB"/>
</dbReference>
<dbReference type="GO" id="GO:0007197">
    <property type="term" value="P:adenylate cyclase-inhibiting G protein-coupled acetylcholine receptor signaling pathway"/>
    <property type="evidence" value="ECO:0000250"/>
    <property type="project" value="UniProtKB"/>
</dbReference>
<dbReference type="GO" id="GO:0007193">
    <property type="term" value="P:adenylate cyclase-inhibiting G protein-coupled receptor signaling pathway"/>
    <property type="evidence" value="ECO:0000250"/>
    <property type="project" value="UniProtKB"/>
</dbReference>
<dbReference type="GO" id="GO:0038003">
    <property type="term" value="P:G protein-coupled opioid receptor signaling pathway"/>
    <property type="evidence" value="ECO:0000250"/>
    <property type="project" value="UniProtKB"/>
</dbReference>
<dbReference type="GO" id="GO:0051481">
    <property type="term" value="P:negative regulation of cytosolic calcium ion concentration"/>
    <property type="evidence" value="ECO:0000250"/>
    <property type="project" value="UniProtKB"/>
</dbReference>
<dbReference type="GO" id="GO:0045019">
    <property type="term" value="P:negative regulation of nitric oxide biosynthetic process"/>
    <property type="evidence" value="ECO:0000250"/>
    <property type="project" value="UniProtKB"/>
</dbReference>
<dbReference type="GO" id="GO:0061358">
    <property type="term" value="P:negative regulation of Wnt protein secretion"/>
    <property type="evidence" value="ECO:0000250"/>
    <property type="project" value="UniProtKB"/>
</dbReference>
<dbReference type="GO" id="GO:0007200">
    <property type="term" value="P:phospholipase C-activating G protein-coupled receptor signaling pathway"/>
    <property type="evidence" value="ECO:0000250"/>
    <property type="project" value="UniProtKB"/>
</dbReference>
<dbReference type="GO" id="GO:0070374">
    <property type="term" value="P:positive regulation of ERK1 and ERK2 cascade"/>
    <property type="evidence" value="ECO:0000250"/>
    <property type="project" value="UniProtKB"/>
</dbReference>
<dbReference type="GO" id="GO:0050769">
    <property type="term" value="P:positive regulation of neurogenesis"/>
    <property type="evidence" value="ECO:0000250"/>
    <property type="project" value="UniProtKB"/>
</dbReference>
<dbReference type="GO" id="GO:2000310">
    <property type="term" value="P:regulation of NMDA receptor activity"/>
    <property type="evidence" value="ECO:0000250"/>
    <property type="project" value="UniProtKB"/>
</dbReference>
<dbReference type="GO" id="GO:0019233">
    <property type="term" value="P:sensory perception of pain"/>
    <property type="evidence" value="ECO:0000250"/>
    <property type="project" value="UniProtKB"/>
</dbReference>
<dbReference type="CDD" id="cd15090">
    <property type="entry name" value="7tmA_Mu_opioid_R"/>
    <property type="match status" value="1"/>
</dbReference>
<dbReference type="FunFam" id="1.20.1070.10:FF:000014">
    <property type="entry name" value="Kappa-type opioid receptor 1"/>
    <property type="match status" value="1"/>
</dbReference>
<dbReference type="Gene3D" id="1.20.1070.10">
    <property type="entry name" value="Rhodopsin 7-helix transmembrane proteins"/>
    <property type="match status" value="1"/>
</dbReference>
<dbReference type="InterPro" id="IPR000276">
    <property type="entry name" value="GPCR_Rhodpsn"/>
</dbReference>
<dbReference type="InterPro" id="IPR017452">
    <property type="entry name" value="GPCR_Rhodpsn_7TM"/>
</dbReference>
<dbReference type="InterPro" id="IPR000105">
    <property type="entry name" value="Mu_opioid_rcpt"/>
</dbReference>
<dbReference type="InterPro" id="IPR001418">
    <property type="entry name" value="Opioid_rcpt"/>
</dbReference>
<dbReference type="PANTHER" id="PTHR24229:SF7">
    <property type="entry name" value="MU-TYPE OPIOID RECEPTOR"/>
    <property type="match status" value="1"/>
</dbReference>
<dbReference type="PANTHER" id="PTHR24229">
    <property type="entry name" value="NEUROPEPTIDES RECEPTOR"/>
    <property type="match status" value="1"/>
</dbReference>
<dbReference type="Pfam" id="PF00001">
    <property type="entry name" value="7tm_1"/>
    <property type="match status" value="1"/>
</dbReference>
<dbReference type="PRINTS" id="PR00237">
    <property type="entry name" value="GPCRRHODOPSN"/>
</dbReference>
<dbReference type="PRINTS" id="PR00537">
    <property type="entry name" value="MUOPIOIDR"/>
</dbReference>
<dbReference type="PRINTS" id="PR00384">
    <property type="entry name" value="OPIOIDR"/>
</dbReference>
<dbReference type="SUPFAM" id="SSF81321">
    <property type="entry name" value="Family A G protein-coupled receptor-like"/>
    <property type="match status" value="1"/>
</dbReference>
<dbReference type="PROSITE" id="PS00237">
    <property type="entry name" value="G_PROTEIN_RECEP_F1_1"/>
    <property type="match status" value="1"/>
</dbReference>
<dbReference type="PROSITE" id="PS50262">
    <property type="entry name" value="G_PROTEIN_RECEP_F1_2"/>
    <property type="match status" value="1"/>
</dbReference>
<comment type="function">
    <text evidence="1 2 3">Receptor for endogenous opioids such as beta-endorphin and endomorphin. Receptor for natural and synthetic opioids including morphine, heroin, DAMGO, fentanyl, etorphine, buprenorphin and methadone. Also activated by enkephalin peptides, such as Met-enkephalin or Met-enkephalin-Arg-Phe, with higher affinity for Met-enkephalin-Arg-Phe. Agonist binding to the receptor induces coupling to an inactive GDP-bound heterotrimeric G-protein complex and subsequent exchange of GDP for GTP in the G-protein alpha subunit leading to dissociation of the G-protein complex with the free GTP-bound G-protein alpha and the G-protein beta-gamma dimer activating downstream cellular effectors. The agonist- and cell type-specific activity is predominantly coupled to pertussis toxin-sensitive G(i) and G(o) G alpha proteins, GNAI1, GNAI2, GNAI3 and GNAO1, and to a lesser extent to pertussis toxin-insensitive G alpha proteins GNAZ and GNA15. They mediate an array of downstream cellular responses, including inhibition of adenylate cyclase activity and both N-type and L-type calcium channels, activation of inward rectifying potassium channels, mitogen-activated protein kinase (MAPK), phospholipase C (PLC), phosphoinositide/protein kinase (PKC), phosphoinositide 3-kinase (PI3K) and regulation of NF-kappa-B. Also couples to adenylate cyclase stimulatory G alpha proteins. The selective temporal coupling to G-proteins and subsequent signaling can be regulated by RGSZ proteins, such as RGS9, RGS17 and RGS4. Phosphorylation by members of the GPRK subfamily of Ser/Thr protein kinases and association with beta-arrestins is involved in short-term receptor desensitization. Beta-arrestins associate with the GPRK-phosphorylated receptor and uncouple it from the G-protein thus terminating signal transduction. The phosphorylated receptor is internalized through endocytosis via clathrin-coated pits which involves beta-arrestins. The activation of the ERK pathway occurs either in a G-protein-dependent or a beta-arrestin-dependent manner and is regulated by agonist-specific receptor phosphorylation. Acts as a class A G-protein coupled receptor (GPCR) which dissociates from beta-arrestin at or near the plasma membrane and undergoes rapid recycling. Receptor down-regulation pathways are varying with the agonist and occur dependent or independent of G-protein coupling. Endogenous ligands induce rapid desensitization, endocytosis and recycling. Heterooligomerization with other GPCRs can modulate agonist binding, signaling and trafficking properties. Involved in neurogenesis.</text>
</comment>
<comment type="subunit">
    <text evidence="1 2 3">Forms homooligomers and heterooligomers with other GPCRs, such as OPRD1, OPRK1, OPRL1, NPFFR2, ADRA2A, SSTR2, CNR1 and CCR5 (probably in dimeric forms). Interacts with heterotrimeric G proteins; interaction with a heterotrimeric complex containing GNAI1, GNB1 and GNG2 stabilizes the active conformation of the receptor and increases its affinity for endomorphin-2, the synthetic opioid peptide DAMGO and for morphinan agonists (By similarity). Interacts with PPL; the interaction disrupts agonist-mediated G-protein activation. Interacts (via C-terminus) with DNAJB4 (via C-terminus). Interacts with calmodulin; the interaction inhibits the constitutive activity of OPRM1; it abolishes basal and attenuates agonist-stimulated G-protein coupling. Interacts with FLNA, PLD2, RANBP9 and WLS and GPM6A (By similarity). Interacts with RTP4 (By similarity). Interacts with SYP and GNAS (By similarity). Interacts with RGS9, RGS17, RGS20, RGS4, PPP1R9B and HINT1.</text>
</comment>
<comment type="subcellular location">
    <subcellularLocation>
        <location evidence="3">Cell membrane</location>
        <topology evidence="3">Multi-pass membrane protein</topology>
    </subcellularLocation>
    <subcellularLocation>
        <location evidence="4">Cell projection</location>
        <location evidence="4">Axon</location>
    </subcellularLocation>
    <subcellularLocation>
        <location evidence="4">Perikaryon</location>
    </subcellularLocation>
    <subcellularLocation>
        <location evidence="4">Cell projection</location>
        <location evidence="4">Dendrite</location>
    </subcellularLocation>
    <subcellularLocation>
        <location evidence="4">Endosome</location>
    </subcellularLocation>
    <text evidence="4">Is rapidly internalized after agonist binding.</text>
</comment>
<comment type="PTM">
    <text evidence="1">Phosphorylated. Differentially phosphorylated in basal and agonist-induced conditions. Agonist-mediated phosphorylation modulates receptor internalization. Phosphorylated by GRK2 in a agonist-dependent manner. Phosphorylation at Tyr-168 requires receptor activation, is dependent on non-receptor protein tyrosine kinase Src and results in a decrease in agonist efficacy by reducing G-protein coupling efficiency. Phosphorylated on tyrosine residues; the phosphorylation is involved in agonist-induced G-protein-independent receptor down-regulation. Phosphorylation at Ser-377 is involved in G-protein-dependent but not beta-arrestin-dependent activation of the ERK pathway (By similarity).</text>
</comment>
<comment type="PTM">
    <text evidence="3">Ubiquitinated. A basal ubiquitination seems not to be related to degradation. Ubiquitination is increased upon formation of OPRM1:OPRD1 oligomers leading to proteasomal degradation; the ubiquitination is diminished by RTP4.</text>
</comment>
<comment type="similarity">
    <text evidence="6">Belongs to the G-protein coupled receptor 1 family.</text>
</comment>
<reference key="1">
    <citation type="journal article" date="2004" name="Cell">
        <title>Accelerated evolution of nervous system genes in the origin of Homo sapiens.</title>
        <authorList>
            <person name="Dorus S."/>
            <person name="Vallender E.J."/>
            <person name="Evans P.D."/>
            <person name="Anderson J.R."/>
            <person name="Gilbert S.L."/>
            <person name="Mahowald M."/>
            <person name="Wyckoff G.J."/>
            <person name="Malcom C.M."/>
            <person name="Lahn B.T."/>
        </authorList>
    </citation>
    <scope>NUCLEOTIDE SEQUENCE [MRNA]</scope>
</reference>
<accession>Q5IS84</accession>
<proteinExistence type="evidence at transcript level"/>
<feature type="chain" id="PRO_0000246162" description="Mu-type opioid receptor">
    <location>
        <begin position="1"/>
        <end position="400"/>
    </location>
</feature>
<feature type="topological domain" description="Extracellular" evidence="3">
    <location>
        <begin position="1"/>
        <end position="68"/>
    </location>
</feature>
<feature type="transmembrane region" description="Helical; Name=1" evidence="3">
    <location>
        <begin position="69"/>
        <end position="93"/>
    </location>
</feature>
<feature type="topological domain" description="Cytoplasmic" evidence="3">
    <location>
        <begin position="94"/>
        <end position="106"/>
    </location>
</feature>
<feature type="transmembrane region" description="Helical; Name=2" evidence="3">
    <location>
        <begin position="107"/>
        <end position="131"/>
    </location>
</feature>
<feature type="topological domain" description="Extracellular" evidence="3">
    <location>
        <begin position="132"/>
        <end position="142"/>
    </location>
</feature>
<feature type="transmembrane region" description="Helical; Name=3" evidence="3">
    <location>
        <begin position="143"/>
        <end position="165"/>
    </location>
</feature>
<feature type="topological domain" description="Cytoplasmic" evidence="3">
    <location>
        <begin position="166"/>
        <end position="185"/>
    </location>
</feature>
<feature type="transmembrane region" description="Helical; Name=4" evidence="3">
    <location>
        <begin position="186"/>
        <end position="207"/>
    </location>
</feature>
<feature type="topological domain" description="Extracellular" evidence="3">
    <location>
        <begin position="208"/>
        <end position="230"/>
    </location>
</feature>
<feature type="transmembrane region" description="Helical; Name=5" evidence="3">
    <location>
        <begin position="231"/>
        <end position="255"/>
    </location>
</feature>
<feature type="topological domain" description="Cytoplasmic" evidence="3">
    <location>
        <begin position="256"/>
        <end position="279"/>
    </location>
</feature>
<feature type="transmembrane region" description="Helical; Name=6" evidence="3">
    <location>
        <begin position="280"/>
        <end position="306"/>
    </location>
</feature>
<feature type="topological domain" description="Extracellular" evidence="3">
    <location>
        <begin position="307"/>
        <end position="314"/>
    </location>
</feature>
<feature type="transmembrane region" description="Helical; Name=7" evidence="3">
    <location>
        <begin position="315"/>
        <end position="338"/>
    </location>
</feature>
<feature type="topological domain" description="Cytoplasmic" evidence="3">
    <location>
        <begin position="339"/>
        <end position="400"/>
    </location>
</feature>
<feature type="short sequence motif" description="NPxxY; plays a role in stabilizing the activated conformation of the receptor" evidence="3">
    <location>
        <begin position="334"/>
        <end position="338"/>
    </location>
</feature>
<feature type="modified residue" description="Phosphotyrosine" evidence="1">
    <location>
        <position position="168"/>
    </location>
</feature>
<feature type="modified residue" description="Phosphoserine" evidence="3">
    <location>
        <position position="365"/>
    </location>
</feature>
<feature type="modified residue" description="Phosphothreonine" evidence="1">
    <location>
        <position position="372"/>
    </location>
</feature>
<feature type="modified residue" description="Phosphoserine" evidence="1">
    <location>
        <position position="377"/>
    </location>
</feature>
<feature type="modified residue" description="Phosphothreonine" evidence="1">
    <location>
        <position position="396"/>
    </location>
</feature>
<feature type="lipid moiety-binding region" description="S-palmitoyl cysteine" evidence="5">
    <location>
        <position position="353"/>
    </location>
</feature>
<feature type="glycosylation site" description="N-linked (GlcNAc...) asparagine" evidence="5">
    <location>
        <position position="9"/>
    </location>
</feature>
<feature type="glycosylation site" description="N-linked (GlcNAc...) asparagine" evidence="5">
    <location>
        <position position="12"/>
    </location>
</feature>
<feature type="glycosylation site" description="N-linked (GlcNAc...) asparagine" evidence="5">
    <location>
        <position position="33"/>
    </location>
</feature>
<feature type="glycosylation site" description="N-linked (GlcNAc...) asparagine" evidence="5">
    <location>
        <position position="40"/>
    </location>
</feature>
<feature type="glycosylation site" description="N-linked (GlcNAc...) asparagine" evidence="5">
    <location>
        <position position="48"/>
    </location>
</feature>
<feature type="disulfide bond" evidence="6">
    <location>
        <begin position="142"/>
        <end position="219"/>
    </location>
</feature>
<keyword id="KW-1003">Cell membrane</keyword>
<keyword id="KW-0966">Cell projection</keyword>
<keyword id="KW-1015">Disulfide bond</keyword>
<keyword id="KW-0967">Endosome</keyword>
<keyword id="KW-0297">G-protein coupled receptor</keyword>
<keyword id="KW-0325">Glycoprotein</keyword>
<keyword id="KW-0449">Lipoprotein</keyword>
<keyword id="KW-0472">Membrane</keyword>
<keyword id="KW-0564">Palmitate</keyword>
<keyword id="KW-0597">Phosphoprotein</keyword>
<keyword id="KW-0675">Receptor</keyword>
<keyword id="KW-1185">Reference proteome</keyword>
<keyword id="KW-0807">Transducer</keyword>
<keyword id="KW-0812">Transmembrane</keyword>
<keyword id="KW-1133">Transmembrane helix</keyword>
<keyword id="KW-0832">Ubl conjugation</keyword>
<organism>
    <name type="scientific">Saimiri boliviensis boliviensis</name>
    <name type="common">Bolivian squirrel monkey</name>
    <dbReference type="NCBI Taxonomy" id="39432"/>
    <lineage>
        <taxon>Eukaryota</taxon>
        <taxon>Metazoa</taxon>
        <taxon>Chordata</taxon>
        <taxon>Craniata</taxon>
        <taxon>Vertebrata</taxon>
        <taxon>Euteleostomi</taxon>
        <taxon>Mammalia</taxon>
        <taxon>Eutheria</taxon>
        <taxon>Euarchontoglires</taxon>
        <taxon>Primates</taxon>
        <taxon>Haplorrhini</taxon>
        <taxon>Platyrrhini</taxon>
        <taxon>Cebidae</taxon>
        <taxon>Saimiriinae</taxon>
        <taxon>Saimiri</taxon>
    </lineage>
</organism>